<protein>
    <recommendedName>
        <fullName evidence="1">NADH-quinone oxidoreductase subunit K</fullName>
        <ecNumber evidence="1">7.1.1.-</ecNumber>
    </recommendedName>
    <alternativeName>
        <fullName evidence="1">NADH dehydrogenase I subunit K</fullName>
    </alternativeName>
    <alternativeName>
        <fullName evidence="1">NDH-1 subunit K</fullName>
    </alternativeName>
</protein>
<gene>
    <name evidence="1" type="primary">nuoK</name>
    <name type="ordered locus">Mjls_1540</name>
</gene>
<dbReference type="EC" id="7.1.1.-" evidence="1"/>
<dbReference type="EMBL" id="CP000580">
    <property type="protein sequence ID" value="ABN97338.1"/>
    <property type="molecule type" value="Genomic_DNA"/>
</dbReference>
<dbReference type="SMR" id="A3PWR1"/>
<dbReference type="KEGG" id="mjl:Mjls_1540"/>
<dbReference type="HOGENOM" id="CLU_144724_0_0_11"/>
<dbReference type="BioCyc" id="MSP164757:G1G8C-1557-MONOMER"/>
<dbReference type="GO" id="GO:0030964">
    <property type="term" value="C:NADH dehydrogenase complex"/>
    <property type="evidence" value="ECO:0007669"/>
    <property type="project" value="TreeGrafter"/>
</dbReference>
<dbReference type="GO" id="GO:0005886">
    <property type="term" value="C:plasma membrane"/>
    <property type="evidence" value="ECO:0007669"/>
    <property type="project" value="UniProtKB-SubCell"/>
</dbReference>
<dbReference type="GO" id="GO:0050136">
    <property type="term" value="F:NADH:ubiquinone reductase (non-electrogenic) activity"/>
    <property type="evidence" value="ECO:0007669"/>
    <property type="project" value="UniProtKB-UniRule"/>
</dbReference>
<dbReference type="GO" id="GO:0048038">
    <property type="term" value="F:quinone binding"/>
    <property type="evidence" value="ECO:0007669"/>
    <property type="project" value="UniProtKB-KW"/>
</dbReference>
<dbReference type="GO" id="GO:0042773">
    <property type="term" value="P:ATP synthesis coupled electron transport"/>
    <property type="evidence" value="ECO:0007669"/>
    <property type="project" value="InterPro"/>
</dbReference>
<dbReference type="FunFam" id="1.10.287.3510:FF:000001">
    <property type="entry name" value="NADH-quinone oxidoreductase subunit K"/>
    <property type="match status" value="1"/>
</dbReference>
<dbReference type="Gene3D" id="1.10.287.3510">
    <property type="match status" value="1"/>
</dbReference>
<dbReference type="HAMAP" id="MF_01456">
    <property type="entry name" value="NDH1_NuoK"/>
    <property type="match status" value="1"/>
</dbReference>
<dbReference type="InterPro" id="IPR001133">
    <property type="entry name" value="NADH_UbQ_OxRdtase_chain4L/K"/>
</dbReference>
<dbReference type="InterPro" id="IPR039428">
    <property type="entry name" value="NUOK/Mnh_C1-like"/>
</dbReference>
<dbReference type="NCBIfam" id="NF004320">
    <property type="entry name" value="PRK05715.1-2"/>
    <property type="match status" value="1"/>
</dbReference>
<dbReference type="NCBIfam" id="NF004321">
    <property type="entry name" value="PRK05715.1-3"/>
    <property type="match status" value="1"/>
</dbReference>
<dbReference type="NCBIfam" id="NF004323">
    <property type="entry name" value="PRK05715.1-5"/>
    <property type="match status" value="1"/>
</dbReference>
<dbReference type="PANTHER" id="PTHR11434:SF21">
    <property type="entry name" value="NADH DEHYDROGENASE SUBUNIT 4L-RELATED"/>
    <property type="match status" value="1"/>
</dbReference>
<dbReference type="PANTHER" id="PTHR11434">
    <property type="entry name" value="NADH-UBIQUINONE OXIDOREDUCTASE SUBUNIT ND4L"/>
    <property type="match status" value="1"/>
</dbReference>
<dbReference type="Pfam" id="PF00420">
    <property type="entry name" value="Oxidored_q2"/>
    <property type="match status" value="1"/>
</dbReference>
<keyword id="KW-1003">Cell membrane</keyword>
<keyword id="KW-0472">Membrane</keyword>
<keyword id="KW-0520">NAD</keyword>
<keyword id="KW-0874">Quinone</keyword>
<keyword id="KW-1278">Translocase</keyword>
<keyword id="KW-0812">Transmembrane</keyword>
<keyword id="KW-1133">Transmembrane helix</keyword>
<keyword id="KW-0813">Transport</keyword>
<name>NUOK_MYCSJ</name>
<reference key="1">
    <citation type="submission" date="2007-02" db="EMBL/GenBank/DDBJ databases">
        <title>Complete sequence of Mycobacterium sp. JLS.</title>
        <authorList>
            <consortium name="US DOE Joint Genome Institute"/>
            <person name="Copeland A."/>
            <person name="Lucas S."/>
            <person name="Lapidus A."/>
            <person name="Barry K."/>
            <person name="Detter J.C."/>
            <person name="Glavina del Rio T."/>
            <person name="Hammon N."/>
            <person name="Israni S."/>
            <person name="Dalin E."/>
            <person name="Tice H."/>
            <person name="Pitluck S."/>
            <person name="Chain P."/>
            <person name="Malfatti S."/>
            <person name="Shin M."/>
            <person name="Vergez L."/>
            <person name="Schmutz J."/>
            <person name="Larimer F."/>
            <person name="Land M."/>
            <person name="Hauser L."/>
            <person name="Kyrpides N."/>
            <person name="Mikhailova N."/>
            <person name="Miller C.D."/>
            <person name="Anderson A.J."/>
            <person name="Sims R.C."/>
            <person name="Richardson P."/>
        </authorList>
    </citation>
    <scope>NUCLEOTIDE SEQUENCE [LARGE SCALE GENOMIC DNA]</scope>
    <source>
        <strain>JLS</strain>
    </source>
</reference>
<accession>A3PWR1</accession>
<organism>
    <name type="scientific">Mycobacterium sp. (strain JLS)</name>
    <dbReference type="NCBI Taxonomy" id="164757"/>
    <lineage>
        <taxon>Bacteria</taxon>
        <taxon>Bacillati</taxon>
        <taxon>Actinomycetota</taxon>
        <taxon>Actinomycetes</taxon>
        <taxon>Mycobacteriales</taxon>
        <taxon>Mycobacteriaceae</taxon>
        <taxon>Mycobacterium</taxon>
    </lineage>
</organism>
<sequence length="99" mass="10851">MNPDNYLYLSALLFTIGAAGVLLRRNVIVVFMCVELMLNAANLAFVAFSRMHGQLDGQVVAFFTMVVAACEVVIGLAIIMTIYRARRSASVDDANLLKH</sequence>
<proteinExistence type="inferred from homology"/>
<comment type="function">
    <text evidence="1">NDH-1 shuttles electrons from NADH, via FMN and iron-sulfur (Fe-S) centers, to quinones in the respiratory chain. The immediate electron acceptor for the enzyme in this species is believed to be a menaquinone. Couples the redox reaction to proton translocation (for every two electrons transferred, four hydrogen ions are translocated across the cytoplasmic membrane), and thus conserves the redox energy in a proton gradient.</text>
</comment>
<comment type="catalytic activity">
    <reaction evidence="1">
        <text>a quinone + NADH + 5 H(+)(in) = a quinol + NAD(+) + 4 H(+)(out)</text>
        <dbReference type="Rhea" id="RHEA:57888"/>
        <dbReference type="ChEBI" id="CHEBI:15378"/>
        <dbReference type="ChEBI" id="CHEBI:24646"/>
        <dbReference type="ChEBI" id="CHEBI:57540"/>
        <dbReference type="ChEBI" id="CHEBI:57945"/>
        <dbReference type="ChEBI" id="CHEBI:132124"/>
    </reaction>
</comment>
<comment type="subunit">
    <text evidence="1">NDH-1 is composed of 14 different subunits. Subunits NuoA, H, J, K, L, M, N constitute the membrane sector of the complex.</text>
</comment>
<comment type="subcellular location">
    <subcellularLocation>
        <location evidence="1">Cell membrane</location>
        <topology evidence="1">Multi-pass membrane protein</topology>
    </subcellularLocation>
</comment>
<comment type="similarity">
    <text evidence="1">Belongs to the complex I subunit 4L family.</text>
</comment>
<feature type="chain" id="PRO_0000390132" description="NADH-quinone oxidoreductase subunit K">
    <location>
        <begin position="1"/>
        <end position="99"/>
    </location>
</feature>
<feature type="transmembrane region" description="Helical" evidence="1">
    <location>
        <begin position="3"/>
        <end position="23"/>
    </location>
</feature>
<feature type="transmembrane region" description="Helical" evidence="1">
    <location>
        <begin position="28"/>
        <end position="48"/>
    </location>
</feature>
<feature type="transmembrane region" description="Helical" evidence="1">
    <location>
        <begin position="59"/>
        <end position="79"/>
    </location>
</feature>
<evidence type="ECO:0000255" key="1">
    <source>
        <dbReference type="HAMAP-Rule" id="MF_01456"/>
    </source>
</evidence>